<feature type="chain" id="PRO_0000054756" description="Ribitol 2-dehydrogenase">
    <location>
        <begin position="1"/>
        <end position="249"/>
    </location>
</feature>
<feature type="active site" description="Proton acceptor" evidence="2">
    <location>
        <position position="160"/>
    </location>
</feature>
<feature type="binding site" evidence="1">
    <location>
        <begin position="20"/>
        <end position="43"/>
    </location>
    <ligand>
        <name>NAD(+)</name>
        <dbReference type="ChEBI" id="CHEBI:57540"/>
    </ligand>
</feature>
<feature type="sequence variant" description="In strain: D.">
    <original>A</original>
    <variation>P</variation>
    <location>
        <position position="196"/>
    </location>
</feature>
<feature type="sequence conflict" description="In Ref. 2; AAA25140." evidence="3" ref="2">
    <original>AV</original>
    <variation>SS</variation>
    <location>
        <begin position="146"/>
        <end position="147"/>
    </location>
</feature>
<feature type="sequence conflict" description="In Ref. 1; AA sequence." evidence="3" ref="1">
    <original>N</original>
    <variation>D</variation>
    <location>
        <position position="212"/>
    </location>
</feature>
<dbReference type="EC" id="1.1.1.56"/>
<dbReference type="EMBL" id="M25606">
    <property type="protein sequence ID" value="AAA25140.1"/>
    <property type="molecule type" value="Genomic_DNA"/>
</dbReference>
<dbReference type="EMBL" id="X02448">
    <property type="protein sequence ID" value="CAA26292.1"/>
    <property type="molecule type" value="Genomic_DNA"/>
</dbReference>
<dbReference type="PIR" id="A94585">
    <property type="entry name" value="DEKBR"/>
</dbReference>
<dbReference type="PIR" id="S07134">
    <property type="entry name" value="S07134"/>
</dbReference>
<dbReference type="SMR" id="P00335"/>
<dbReference type="STRING" id="548.EAG7_00524"/>
<dbReference type="BioCyc" id="MetaCyc:MONOMER-12237"/>
<dbReference type="GO" id="GO:0016020">
    <property type="term" value="C:membrane"/>
    <property type="evidence" value="ECO:0007669"/>
    <property type="project" value="TreeGrafter"/>
</dbReference>
<dbReference type="GO" id="GO:0050255">
    <property type="term" value="F:ribitol 2-dehydrogenase (NAD+) activity"/>
    <property type="evidence" value="ECO:0007669"/>
    <property type="project" value="UniProtKB-EC"/>
</dbReference>
<dbReference type="CDD" id="cd05233">
    <property type="entry name" value="SDR_c"/>
    <property type="match status" value="1"/>
</dbReference>
<dbReference type="FunFam" id="3.40.50.720:FF:000084">
    <property type="entry name" value="Short-chain dehydrogenase reductase"/>
    <property type="match status" value="1"/>
</dbReference>
<dbReference type="Gene3D" id="3.40.50.720">
    <property type="entry name" value="NAD(P)-binding Rossmann-like Domain"/>
    <property type="match status" value="1"/>
</dbReference>
<dbReference type="InterPro" id="IPR036291">
    <property type="entry name" value="NAD(P)-bd_dom_sf"/>
</dbReference>
<dbReference type="InterPro" id="IPR020904">
    <property type="entry name" value="Sc_DH/Rdtase_CS"/>
</dbReference>
<dbReference type="InterPro" id="IPR002347">
    <property type="entry name" value="SDR_fam"/>
</dbReference>
<dbReference type="PANTHER" id="PTHR44196">
    <property type="entry name" value="DEHYDROGENASE/REDUCTASE SDR FAMILY MEMBER 7B"/>
    <property type="match status" value="1"/>
</dbReference>
<dbReference type="PANTHER" id="PTHR44196:SF1">
    <property type="entry name" value="DEHYDROGENASE_REDUCTASE SDR FAMILY MEMBER 7B"/>
    <property type="match status" value="1"/>
</dbReference>
<dbReference type="Pfam" id="PF00106">
    <property type="entry name" value="adh_short"/>
    <property type="match status" value="1"/>
</dbReference>
<dbReference type="PRINTS" id="PR00081">
    <property type="entry name" value="GDHRDH"/>
</dbReference>
<dbReference type="SUPFAM" id="SSF51735">
    <property type="entry name" value="NAD(P)-binding Rossmann-fold domains"/>
    <property type="match status" value="1"/>
</dbReference>
<dbReference type="PROSITE" id="PS00061">
    <property type="entry name" value="ADH_SHORT"/>
    <property type="match status" value="1"/>
</dbReference>
<organism>
    <name type="scientific">Klebsiella aerogenes</name>
    <name type="common">Enterobacter aerogenes</name>
    <dbReference type="NCBI Taxonomy" id="548"/>
    <lineage>
        <taxon>Bacteria</taxon>
        <taxon>Pseudomonadati</taxon>
        <taxon>Pseudomonadota</taxon>
        <taxon>Gammaproteobacteria</taxon>
        <taxon>Enterobacterales</taxon>
        <taxon>Enterobacteriaceae</taxon>
        <taxon>Klebsiella/Raoultella group</taxon>
        <taxon>Klebsiella</taxon>
    </lineage>
</organism>
<reference key="1">
    <citation type="journal article" date="1985" name="Biochem. J.">
        <title>Ribitol dehydrogenase of Klebsiella aerogenes. Sequence and properties of wild-type and mutant strains.</title>
        <authorList>
            <person name="Dothie J.M."/>
            <person name="Giglio J.R."/>
            <person name="Moore C.H."/>
            <person name="Taylor S.S."/>
            <person name="Hartley B.S."/>
        </authorList>
    </citation>
    <scope>PROTEIN SEQUENCE</scope>
    <source>
        <strain>A</strain>
        <strain>D</strain>
    </source>
</reference>
<reference key="2">
    <citation type="journal article" date="1985" name="Biochem. J.">
        <title>Ribitol dehydrogenase of Klebsiella aerogenes. Sequence of the structural gene.</title>
        <authorList>
            <person name="Loviny T."/>
            <person name="Norton P.M."/>
            <person name="Hartley B.S."/>
        </authorList>
    </citation>
    <scope>NUCLEOTIDE SEQUENCE [GENOMIC DNA]</scope>
</reference>
<reference key="3">
    <citation type="journal article" date="1985" name="EMBO J.">
        <title>Structure of wild-type and mutant repressors and of the control region of the rbt operon of Klebsiella aerogenes.</title>
        <authorList>
            <person name="Wu J.C."/>
            <person name="Anderton-Loviny T."/>
            <person name="Smith C.A."/>
            <person name="Hartley B.S."/>
        </authorList>
    </citation>
    <scope>NUCLEOTIDE SEQUENCE [GENOMIC DNA] OF 1-68</scope>
</reference>
<comment type="catalytic activity">
    <reaction>
        <text>ribitol + NAD(+) = D-ribulose + NADH + H(+)</text>
        <dbReference type="Rhea" id="RHEA:20053"/>
        <dbReference type="ChEBI" id="CHEBI:15378"/>
        <dbReference type="ChEBI" id="CHEBI:15963"/>
        <dbReference type="ChEBI" id="CHEBI:17173"/>
        <dbReference type="ChEBI" id="CHEBI:57540"/>
        <dbReference type="ChEBI" id="CHEBI:57945"/>
        <dbReference type="EC" id="1.1.1.56"/>
    </reaction>
</comment>
<comment type="subunit">
    <text>Homotetramer.</text>
</comment>
<comment type="miscellaneous">
    <text>The sequence shown is that of strain A.</text>
</comment>
<comment type="similarity">
    <text evidence="3">Belongs to the short-chain dehydrogenases/reductases (SDR) family.</text>
</comment>
<keyword id="KW-0903">Direct protein sequencing</keyword>
<keyword id="KW-0520">NAD</keyword>
<keyword id="KW-0560">Oxidoreductase</keyword>
<protein>
    <recommendedName>
        <fullName>Ribitol 2-dehydrogenase</fullName>
        <shortName>RDH</shortName>
        <ecNumber>1.1.1.56</ecNumber>
    </recommendedName>
</protein>
<proteinExistence type="evidence at protein level"/>
<accession>P00335</accession>
<name>RIDH_KLEAE</name>
<evidence type="ECO:0000250" key="1"/>
<evidence type="ECO:0000255" key="2">
    <source>
        <dbReference type="PROSITE-ProRule" id="PRU10001"/>
    </source>
</evidence>
<evidence type="ECO:0000305" key="3"/>
<gene>
    <name type="primary">rbtD</name>
</gene>
<sequence>MKHSVSSMNTSLSGKVAAITGAASGIGLECARTLLGAGAKVVLIDREGEKLNKLVAELGENAFALQVDLMQADQVDNLLQGILQLTGRLDIFHANAGAYIGGPVAEGDPDVWDRVLHLNINAAFRCVRSVLPHLIAQKSGDIIFTAVIAGVVPVIWEPVYTASKFAVQAFVHTTRRQVAQYGVRVGAVLPGPVVTALLDDWPKAKMDEALANGSLMQPIEVAESVLFMVTRSKNVTVRDIVILPNSVDL</sequence>